<protein>
    <recommendedName>
        <fullName evidence="5">DNA-binding transcriptional repressor CapW</fullName>
    </recommendedName>
    <alternativeName>
        <fullName evidence="4">CBASS-associated protein with WYL domain</fullName>
        <shortName evidence="4">CapW</shortName>
        <shortName evidence="4">Ec CapW</shortName>
    </alternativeName>
</protein>
<name>CAPW_ECOLX</name>
<proteinExistence type="evidence at protein level"/>
<feature type="chain" id="PRO_0000459331" description="DNA-binding transcriptional repressor CapW">
    <location>
        <begin position="1"/>
        <end position="299"/>
    </location>
</feature>
<feature type="domain" description="WYL" evidence="1">
    <location>
        <begin position="131"/>
        <end position="211"/>
    </location>
</feature>
<feature type="region of interest" description="Winged HTH domain" evidence="3">
    <location>
        <begin position="1"/>
        <end position="95"/>
    </location>
</feature>
<feature type="region of interest" description="Disordered" evidence="2">
    <location>
        <begin position="1"/>
        <end position="21"/>
    </location>
</feature>
<feature type="region of interest" description="WYL domain" evidence="3">
    <location>
        <begin position="96"/>
        <end position="207"/>
    </location>
</feature>
<feature type="region of interest" description="Probable ligand-binding region" evidence="6">
    <location>
        <begin position="156"/>
        <end position="200"/>
    </location>
</feature>
<feature type="region of interest" description="WCX domain" evidence="3">
    <location>
        <begin position="208"/>
        <end position="299"/>
    </location>
</feature>
<feature type="compositionally biased region" description="Basic and acidic residues" evidence="2">
    <location>
        <begin position="1"/>
        <end position="15"/>
    </location>
</feature>
<feature type="mutagenesis site" description="No longer binds cognate promoter DNA, increased expression from the bidirectional promoter." evidence="3">
    <original>R</original>
    <variation>A</variation>
    <location>
        <position position="43"/>
    </location>
</feature>
<feature type="mutagenesis site" description="No longer binds cognate promoter DNA, increased expression from the bidirectional promoter." evidence="3">
    <original>SVPQAS</original>
    <variation>AVPAAA</variation>
    <location>
        <begin position="53"/>
        <end position="58"/>
    </location>
</feature>
<feature type="mutagenesis site" description="Loss of induction by bacteriophage lambda, increased resistance to lambda, constitutive repressor." evidence="3">
    <original>S</original>
    <variation>E</variation>
    <variation>K</variation>
    <location>
        <position position="158"/>
    </location>
</feature>
<feature type="mutagenesis site" description="Loss of induction by bacteriophage lambda, increased resistance to lambda, constitutive repressor." evidence="3">
    <original>R</original>
    <variation>A</variation>
    <location>
        <position position="190"/>
    </location>
</feature>
<feature type="mutagenesis site" description="Almost complete loss of induction by bacteriophage lambda, wild-type resistance to lambda, constitutive repressor." evidence="3">
    <original>R</original>
    <variation>A</variation>
    <location>
        <position position="194"/>
    </location>
</feature>
<feature type="mutagenesis site" description="Loss of induction by bacteriophage lambda, wild-type resistance to lambda, constitutive repressor." evidence="3">
    <original>R</original>
    <variation>A</variation>
    <location>
        <position position="200"/>
    </location>
</feature>
<feature type="mutagenesis site" description="Almost complete loss of induction by bacteriophage lambda, increased resistance to lambda, constitutive repressor." evidence="3">
    <original>D</original>
    <variation>A</variation>
    <location>
        <position position="245"/>
    </location>
</feature>
<keyword id="KW-0051">Antiviral defense</keyword>
<keyword id="KW-0238">DNA-binding</keyword>
<keyword id="KW-0678">Repressor</keyword>
<keyword id="KW-0804">Transcription</keyword>
<keyword id="KW-0805">Transcription regulation</keyword>
<organism>
    <name type="scientific">Escherichia coli</name>
    <dbReference type="NCBI Taxonomy" id="562"/>
    <lineage>
        <taxon>Bacteria</taxon>
        <taxon>Pseudomonadati</taxon>
        <taxon>Pseudomonadota</taxon>
        <taxon>Gammaproteobacteria</taxon>
        <taxon>Enterobacterales</taxon>
        <taxon>Enterobacteriaceae</taxon>
        <taxon>Escherichia</taxon>
    </lineage>
</organism>
<sequence>MPDNFREGDKQDSQKGRQGARWGQERRLEFIDYRLRWDGQINRSSLTDFFGISVPQASLDLSEYTKLAPDNLEYDMSSRVYRSTKLFQPVYMTSSLECYLNDLLQVAIQPEIHFGSFLGWRSPVAAVPRLLRRLDTDVVSQILRAIRENEAVHVIYQSMSDPQGSKRTLTPHSLVHDGYRWHTRAWCHKRGEYRDFLLSRIVQAQNAGPDEERANGDLAWNTFIKIILIAHPGLCLAQRNLIERDYAMIDGEIHLECRQALLHYLLFQLNLTETQSHQAPEALQLALKNKDEIYALLKQ</sequence>
<evidence type="ECO:0000255" key="1">
    <source>
        <dbReference type="PROSITE-ProRule" id="PRU01395"/>
    </source>
</evidence>
<evidence type="ECO:0000256" key="2">
    <source>
        <dbReference type="SAM" id="MobiDB-lite"/>
    </source>
</evidence>
<evidence type="ECO:0000269" key="3">
    <source>
    </source>
</evidence>
<evidence type="ECO:0000303" key="4">
    <source>
    </source>
</evidence>
<evidence type="ECO:0000305" key="5"/>
<evidence type="ECO:0000305" key="6">
    <source>
    </source>
</evidence>
<evidence type="ECO:0000312" key="7">
    <source>
        <dbReference type="EMBL" id="JSOJ01000102"/>
    </source>
</evidence>
<evidence type="ECO:0000312" key="8">
    <source>
        <dbReference type="EMBL" id="QKY44555.1"/>
    </source>
</evidence>
<accession>P0DX76</accession>
<gene>
    <name evidence="4" type="primary">capW</name>
    <name evidence="8" type="ORF">HR072_00380</name>
    <name type="ORF">PR06_RS25925</name>
</gene>
<dbReference type="EMBL" id="JSOJ01000102">
    <property type="status" value="NOT_ANNOTATED_CDS"/>
    <property type="molecule type" value="Genomic_DNA"/>
</dbReference>
<dbReference type="EMBL" id="CP054230">
    <property type="protein sequence ID" value="QKY44555.1"/>
    <property type="molecule type" value="Genomic_DNA"/>
</dbReference>
<dbReference type="RefSeq" id="WP_001534693.1">
    <property type="nucleotide sequence ID" value="NZ_WIKR01000024.1"/>
</dbReference>
<dbReference type="SMR" id="P0DX76"/>
<dbReference type="GO" id="GO:0003677">
    <property type="term" value="F:DNA binding"/>
    <property type="evidence" value="ECO:0007669"/>
    <property type="project" value="UniProtKB-KW"/>
</dbReference>
<dbReference type="GO" id="GO:0051607">
    <property type="term" value="P:defense response to virus"/>
    <property type="evidence" value="ECO:0007669"/>
    <property type="project" value="UniProtKB-KW"/>
</dbReference>
<dbReference type="InterPro" id="IPR016634">
    <property type="entry name" value="CapW-like"/>
</dbReference>
<dbReference type="InterPro" id="IPR051534">
    <property type="entry name" value="CBASS_pafABC_assoc_protein"/>
</dbReference>
<dbReference type="InterPro" id="IPR026881">
    <property type="entry name" value="WYL_dom"/>
</dbReference>
<dbReference type="PANTHER" id="PTHR34580">
    <property type="match status" value="1"/>
</dbReference>
<dbReference type="PANTHER" id="PTHR34580:SF3">
    <property type="entry name" value="PROTEIN PAFB"/>
    <property type="match status" value="1"/>
</dbReference>
<dbReference type="Pfam" id="PF13280">
    <property type="entry name" value="WYL"/>
    <property type="match status" value="1"/>
</dbReference>
<dbReference type="PIRSF" id="PIRSF015558">
    <property type="entry name" value="Txn_reg_DeoR_prd"/>
    <property type="match status" value="1"/>
</dbReference>
<dbReference type="PROSITE" id="PS52050">
    <property type="entry name" value="WYL"/>
    <property type="match status" value="1"/>
</dbReference>
<reference evidence="7" key="1">
    <citation type="journal article" date="2015" name="Genome Res.">
        <title>Large-scale genomic sequencing of extraintestinal pathogenic Escherichia coli strains.</title>
        <authorList>
            <person name="Salipante S.J."/>
            <person name="Roach D.J."/>
            <person name="Kitzman J.O."/>
            <person name="Snyder M.W."/>
            <person name="Stackhouse B."/>
            <person name="Butler-Wu S.M."/>
            <person name="Lee C."/>
            <person name="Cookson B.T."/>
            <person name="Shendure J."/>
        </authorList>
    </citation>
    <scope>NUCLEOTIDE SEQUENCE [LARGE SCALE GENOMIC DNA]</scope>
    <source>
        <strain>UPEC-117</strain>
    </source>
</reference>
<reference evidence="8" key="2">
    <citation type="journal article" date="2020" name="Microbiol. Resour. Announc.">
        <title>Complete Genome Sequences of Seven Uropathogenic Escherichia coli Strains Isolated from Postmenopausal Women with Recurrent Urinary Tract Infection.</title>
        <authorList>
            <person name="Sharon B.M."/>
            <person name="Nguyen A."/>
            <person name="Arute A.P."/>
            <person name="Hulyalkar N.V."/>
            <person name="Nguyen V.H."/>
            <person name="Zimmern P.E."/>
            <person name="De Nisco N.J."/>
        </authorList>
    </citation>
    <scope>NUCLEOTIDE SEQUENCE [LARGE SCALE GENOMIC DNA]</scope>
    <source>
        <strain>UPEC EcPF14</strain>
    </source>
</reference>
<reference key="3">
    <citation type="journal article" date="2022" name="Nucleic Acids Res.">
        <title>Control of bacterial immune signaling by a WYL domain transcription factor.</title>
        <authorList>
            <person name="Blankenchip C.L."/>
            <person name="Nguyen J.V."/>
            <person name="Lau R.K."/>
            <person name="Ye Q."/>
            <person name="Gu Y."/>
            <person name="Corbett K.D."/>
        </authorList>
    </citation>
    <scope>FUNCTION AS A TRANSCRIPTIONAL REPRESSOR</scope>
    <scope>FUNCTION IN VIRAL DEFENSE</scope>
    <scope>SUBUNIT</scope>
    <scope>INDUCTION</scope>
    <scope>DISRUPTION PHENOTYPE</scope>
    <scope>DNA-BINDING</scope>
    <scope>MUTAGENESIS OF ARG-43; 53-SER--SER-58; SER-158; ARG-190; ARG-194; ARG-200 AND ASP-245</scope>
    <source>
        <strain>UPEC EcPF14</strain>
        <strain>UPEC-117</strain>
    </source>
</reference>
<comment type="function">
    <text evidence="3 4 6">Transcriptional regulator of a CBASS antivirus system (PubMed:35536256). CBASS (cyclic oligonucleotide-based antiphage signaling system) provides immunity against bacteriophage (PubMed:35536256). The CD-NTase protein synthesizes cyclic nucleotides in response to infection; these serve as specific second messenger signals (PubMed:35536256). The signals activate a diverse range of effectors, leading to bacterial cell death and thus abortive phage infection (PubMed:35536256). A type III CBASS system (PubMed:35536256). Binds specifically to and represses expression from the CBASS promoter, found between the genes for divergently transcribed capW and cdnC (cognate DNA) (PubMed:35536256). Binds to palindromes that overlap the -10 site in the promoter of cdnC, represses transcription bidirectionally from the binding site (PubMed:35536256). Expression of this CBASS system (Cap17-CapW-CdnC-Cap7-Cap6-Cap18-Cap19) in a susceptible E.coli (strain JP313) confers resistance to bacteriophage lambda cI- (PubMed:35536256). Mutations that make it a constitutive repressor do not change DNA-binding affinity in S.maltophilia (Probable) (PubMed:35536256). DNA-binding may be released upon binding of a signal following phage infection and possibly also another unknown signal (Probable) (PubMed:35536256).</text>
</comment>
<comment type="subunit">
    <text evidence="3">Homodimer (PubMed:35536256).</text>
</comment>
<comment type="induction">
    <text evidence="3">Represses its own expression (PubMed:35536256). Induced within 30 minutes after lambda cI- infection, increases until 120 minutes post-infection (PubMed:35536256).</text>
</comment>
<comment type="disruption phenotype">
    <text evidence="3">Required for CBASS function; cannot be deleted from a plasmid encoding the whole CBASS locus even in the absence of phage challenge.</text>
</comment>